<organism>
    <name type="scientific">Saccharomyces cerevisiae (strain ATCC 204508 / S288c)</name>
    <name type="common">Baker's yeast</name>
    <dbReference type="NCBI Taxonomy" id="559292"/>
    <lineage>
        <taxon>Eukaryota</taxon>
        <taxon>Fungi</taxon>
        <taxon>Dikarya</taxon>
        <taxon>Ascomycota</taxon>
        <taxon>Saccharomycotina</taxon>
        <taxon>Saccharomycetes</taxon>
        <taxon>Saccharomycetales</taxon>
        <taxon>Saccharomycetaceae</taxon>
        <taxon>Saccharomyces</taxon>
    </lineage>
</organism>
<comment type="function">
    <text>Involved in nuclear control of mitochondria.</text>
</comment>
<comment type="disruption phenotype">
    <text evidence="3">Impairs growth on glycerol carbon source.</text>
</comment>
<comment type="miscellaneous">
    <text evidence="2">Present with 2280 molecules/cell in log phase SD medium.</text>
</comment>
<proteinExistence type="evidence at protein level"/>
<gene>
    <name type="primary">GDS1</name>
    <name type="ordered locus">YOR355W</name>
</gene>
<evidence type="ECO:0000256" key="1">
    <source>
        <dbReference type="SAM" id="MobiDB-lite"/>
    </source>
</evidence>
<evidence type="ECO:0000269" key="2">
    <source>
    </source>
</evidence>
<evidence type="ECO:0000269" key="3">
    <source>
    </source>
</evidence>
<accession>P41913</accession>
<accession>D6W350</accession>
<protein>
    <recommendedName>
        <fullName>Protein GDS1</fullName>
    </recommendedName>
</protein>
<keyword id="KW-1185">Reference proteome</keyword>
<name>GLDS1_YEAST</name>
<sequence>MALANSRPLQIPTLENEILHNSNSPVFQLNSMGFTTRADTISNPGTDLIGNQPGMALDDNNLAGSSFSSSQEIKATKPKKDFGAPKKDNPLLEISKLIPVTGERPKPENRDSPLDDDVLHAVFLILWEMDPNQQGMTVKQLCDLLLQKHPDMSNLSTKLSNLISAKLNAYVKKIEKGEKTLTYALSREWSNSSPRRMLYIYRGILSPDYKEHAQAVTMQLKQQLETSGDTSDFNSNGKKKRESSSNQLVNNDSYSSSMTDMKNMSSNSSFSKNLNVGNLAFSLSPEFNIPYSTSPVSLNLSPSMSNNQQQLLTPNSASKSKNNNKKRNYMDEDTNESMTEPKKTKTTKPGKQTKSQSLSVLSTPKKGSSASLSTFASSKNISPDSSLSHNASSNTYVTAAAAAPRLSKLLPKNGFKKNSRSSSELAAIHKVISTQTPIESSSESSQYNSSSSSPVNSAAASSAESLSDINSSQDNGRESNPSSQESRNEVTNWMKIVRNGFLTHDIESPESITLDDLENIFN</sequence>
<reference key="1">
    <citation type="journal article" date="1995" name="Yeast">
        <title>Nucleotide sequence of the GDS1 gene of Saccharomyces cerevisiae.</title>
        <authorList>
            <person name="Konopinska A."/>
            <person name="Szczesniak B."/>
            <person name="Boguta M."/>
        </authorList>
    </citation>
    <scope>NUCLEOTIDE SEQUENCE [GENOMIC DNA]</scope>
    <scope>DISRUPTION PHENOTYPE</scope>
    <source>
        <strain>MB43-15C</strain>
    </source>
</reference>
<reference key="2">
    <citation type="journal article" date="1997" name="Nature">
        <title>The nucleotide sequence of Saccharomyces cerevisiae chromosome XV.</title>
        <authorList>
            <person name="Dujon B."/>
            <person name="Albermann K."/>
            <person name="Aldea M."/>
            <person name="Alexandraki D."/>
            <person name="Ansorge W."/>
            <person name="Arino J."/>
            <person name="Benes V."/>
            <person name="Bohn C."/>
            <person name="Bolotin-Fukuhara M."/>
            <person name="Bordonne R."/>
            <person name="Boyer J."/>
            <person name="Camasses A."/>
            <person name="Casamayor A."/>
            <person name="Casas C."/>
            <person name="Cheret G."/>
            <person name="Cziepluch C."/>
            <person name="Daignan-Fornier B."/>
            <person name="Dang V.-D."/>
            <person name="de Haan M."/>
            <person name="Delius H."/>
            <person name="Durand P."/>
            <person name="Fairhead C."/>
            <person name="Feldmann H."/>
            <person name="Gaillon L."/>
            <person name="Galisson F."/>
            <person name="Gamo F.-J."/>
            <person name="Gancedo C."/>
            <person name="Goffeau A."/>
            <person name="Goulding S.E."/>
            <person name="Grivell L.A."/>
            <person name="Habbig B."/>
            <person name="Hand N.J."/>
            <person name="Hani J."/>
            <person name="Hattenhorst U."/>
            <person name="Hebling U."/>
            <person name="Hernando Y."/>
            <person name="Herrero E."/>
            <person name="Heumann K."/>
            <person name="Hiesel R."/>
            <person name="Hilger F."/>
            <person name="Hofmann B."/>
            <person name="Hollenberg C.P."/>
            <person name="Hughes B."/>
            <person name="Jauniaux J.-C."/>
            <person name="Kalogeropoulos A."/>
            <person name="Katsoulou C."/>
            <person name="Kordes E."/>
            <person name="Lafuente M.J."/>
            <person name="Landt O."/>
            <person name="Louis E.J."/>
            <person name="Maarse A.C."/>
            <person name="Madania A."/>
            <person name="Mannhaupt G."/>
            <person name="Marck C."/>
            <person name="Martin R.P."/>
            <person name="Mewes H.-W."/>
            <person name="Michaux G."/>
            <person name="Paces V."/>
            <person name="Parle-McDermott A.G."/>
            <person name="Pearson B.M."/>
            <person name="Perrin A."/>
            <person name="Pettersson B."/>
            <person name="Poch O."/>
            <person name="Pohl T.M."/>
            <person name="Poirey R."/>
            <person name="Portetelle D."/>
            <person name="Pujol A."/>
            <person name="Purnelle B."/>
            <person name="Ramezani Rad M."/>
            <person name="Rechmann S."/>
            <person name="Schwager C."/>
            <person name="Schweizer M."/>
            <person name="Sor F."/>
            <person name="Sterky F."/>
            <person name="Tarassov I.A."/>
            <person name="Teodoru C."/>
            <person name="Tettelin H."/>
            <person name="Thierry A."/>
            <person name="Tobiasch E."/>
            <person name="Tzermia M."/>
            <person name="Uhlen M."/>
            <person name="Unseld M."/>
            <person name="Valens M."/>
            <person name="Vandenbol M."/>
            <person name="Vetter I."/>
            <person name="Vlcek C."/>
            <person name="Voet M."/>
            <person name="Volckaert G."/>
            <person name="Voss H."/>
            <person name="Wambutt R."/>
            <person name="Wedler H."/>
            <person name="Wiemann S."/>
            <person name="Winsor B."/>
            <person name="Wolfe K.H."/>
            <person name="Zollner A."/>
            <person name="Zumstein E."/>
            <person name="Kleine K."/>
        </authorList>
    </citation>
    <scope>NUCLEOTIDE SEQUENCE [LARGE SCALE GENOMIC DNA]</scope>
    <source>
        <strain>ATCC 204508 / S288c</strain>
    </source>
</reference>
<reference key="3">
    <citation type="journal article" date="2014" name="G3 (Bethesda)">
        <title>The reference genome sequence of Saccharomyces cerevisiae: Then and now.</title>
        <authorList>
            <person name="Engel S.R."/>
            <person name="Dietrich F.S."/>
            <person name="Fisk D.G."/>
            <person name="Binkley G."/>
            <person name="Balakrishnan R."/>
            <person name="Costanzo M.C."/>
            <person name="Dwight S.S."/>
            <person name="Hitz B.C."/>
            <person name="Karra K."/>
            <person name="Nash R.S."/>
            <person name="Weng S."/>
            <person name="Wong E.D."/>
            <person name="Lloyd P."/>
            <person name="Skrzypek M.S."/>
            <person name="Miyasato S.R."/>
            <person name="Simison M."/>
            <person name="Cherry J.M."/>
        </authorList>
    </citation>
    <scope>GENOME REANNOTATION</scope>
    <source>
        <strain>ATCC 204508 / S288c</strain>
    </source>
</reference>
<reference key="4">
    <citation type="journal article" date="2003" name="Nature">
        <title>Global analysis of protein expression in yeast.</title>
        <authorList>
            <person name="Ghaemmaghami S."/>
            <person name="Huh W.-K."/>
            <person name="Bower K."/>
            <person name="Howson R.W."/>
            <person name="Belle A."/>
            <person name="Dephoure N."/>
            <person name="O'Shea E.K."/>
            <person name="Weissman J.S."/>
        </authorList>
    </citation>
    <scope>LEVEL OF PROTEIN EXPRESSION [LARGE SCALE ANALYSIS]</scope>
</reference>
<dbReference type="EMBL" id="U18262">
    <property type="protein sequence ID" value="AAB17574.1"/>
    <property type="molecule type" value="Genomic_DNA"/>
</dbReference>
<dbReference type="EMBL" id="Z75263">
    <property type="protein sequence ID" value="CAA99684.1"/>
    <property type="molecule type" value="Genomic_DNA"/>
</dbReference>
<dbReference type="EMBL" id="BK006948">
    <property type="protein sequence ID" value="DAA11116.1"/>
    <property type="molecule type" value="Genomic_DNA"/>
</dbReference>
<dbReference type="PIR" id="S60483">
    <property type="entry name" value="S60483"/>
</dbReference>
<dbReference type="RefSeq" id="NP_015000.3">
    <property type="nucleotide sequence ID" value="NM_001183775.3"/>
</dbReference>
<dbReference type="SMR" id="P41913"/>
<dbReference type="BioGRID" id="34740">
    <property type="interactions" value="184"/>
</dbReference>
<dbReference type="DIP" id="DIP-1368N"/>
<dbReference type="FunCoup" id="P41913">
    <property type="interactions" value="149"/>
</dbReference>
<dbReference type="IntAct" id="P41913">
    <property type="interactions" value="21"/>
</dbReference>
<dbReference type="MINT" id="P41913"/>
<dbReference type="STRING" id="4932.YOR355W"/>
<dbReference type="iPTMnet" id="P41913"/>
<dbReference type="PaxDb" id="4932-YOR355W"/>
<dbReference type="PeptideAtlas" id="P41913"/>
<dbReference type="EnsemblFungi" id="YOR355W_mRNA">
    <property type="protein sequence ID" value="YOR355W"/>
    <property type="gene ID" value="YOR355W"/>
</dbReference>
<dbReference type="GeneID" id="854537"/>
<dbReference type="KEGG" id="sce:YOR355W"/>
<dbReference type="AGR" id="SGD:S000005882"/>
<dbReference type="SGD" id="S000005882">
    <property type="gene designation" value="GDS1"/>
</dbReference>
<dbReference type="VEuPathDB" id="FungiDB:YOR355W"/>
<dbReference type="eggNOG" id="ENOG502RQJB">
    <property type="taxonomic scope" value="Eukaryota"/>
</dbReference>
<dbReference type="HOGENOM" id="CLU_028816_1_0_1"/>
<dbReference type="InParanoid" id="P41913"/>
<dbReference type="OMA" id="RRMVYVY"/>
<dbReference type="OrthoDB" id="4090479at2759"/>
<dbReference type="BioCyc" id="YEAST:G3O-33826-MONOMER"/>
<dbReference type="BioGRID-ORCS" id="854537">
    <property type="hits" value="0 hits in 10 CRISPR screens"/>
</dbReference>
<dbReference type="PRO" id="PR:P41913"/>
<dbReference type="Proteomes" id="UP000002311">
    <property type="component" value="Chromosome XV"/>
</dbReference>
<dbReference type="RNAct" id="P41913">
    <property type="molecule type" value="protein"/>
</dbReference>
<dbReference type="GO" id="GO:0005737">
    <property type="term" value="C:cytoplasm"/>
    <property type="evidence" value="ECO:0007005"/>
    <property type="project" value="SGD"/>
</dbReference>
<dbReference type="GO" id="GO:0005739">
    <property type="term" value="C:mitochondrion"/>
    <property type="evidence" value="ECO:0007005"/>
    <property type="project" value="SGD"/>
</dbReference>
<dbReference type="GO" id="GO:0005634">
    <property type="term" value="C:nucleus"/>
    <property type="evidence" value="ECO:0000314"/>
    <property type="project" value="SGD"/>
</dbReference>
<dbReference type="GO" id="GO:0062060">
    <property type="term" value="F:NuA4 histone acetyltransferase complex binding"/>
    <property type="evidence" value="ECO:0000314"/>
    <property type="project" value="SGD"/>
</dbReference>
<dbReference type="GO" id="GO:0009060">
    <property type="term" value="P:aerobic respiration"/>
    <property type="evidence" value="ECO:0000315"/>
    <property type="project" value="SGD"/>
</dbReference>
<dbReference type="Pfam" id="PF25318">
    <property type="entry name" value="WH_GDS1"/>
    <property type="match status" value="1"/>
</dbReference>
<feature type="chain" id="PRO_0000087453" description="Protein GDS1">
    <location>
        <begin position="1"/>
        <end position="522"/>
    </location>
</feature>
<feature type="region of interest" description="Disordered" evidence="1">
    <location>
        <begin position="56"/>
        <end position="88"/>
    </location>
</feature>
<feature type="region of interest" description="Disordered" evidence="1">
    <location>
        <begin position="222"/>
        <end position="268"/>
    </location>
</feature>
<feature type="region of interest" description="Disordered" evidence="1">
    <location>
        <begin position="300"/>
        <end position="391"/>
    </location>
</feature>
<feature type="region of interest" description="Disordered" evidence="1">
    <location>
        <begin position="433"/>
        <end position="489"/>
    </location>
</feature>
<feature type="compositionally biased region" description="Polar residues" evidence="1">
    <location>
        <begin position="62"/>
        <end position="73"/>
    </location>
</feature>
<feature type="compositionally biased region" description="Basic and acidic residues" evidence="1">
    <location>
        <begin position="74"/>
        <end position="88"/>
    </location>
</feature>
<feature type="compositionally biased region" description="Polar residues" evidence="1">
    <location>
        <begin position="222"/>
        <end position="236"/>
    </location>
</feature>
<feature type="compositionally biased region" description="Polar residues" evidence="1">
    <location>
        <begin position="244"/>
        <end position="260"/>
    </location>
</feature>
<feature type="compositionally biased region" description="Polar residues" evidence="1">
    <location>
        <begin position="300"/>
        <end position="314"/>
    </location>
</feature>
<feature type="compositionally biased region" description="Polar residues" evidence="1">
    <location>
        <begin position="355"/>
        <end position="366"/>
    </location>
</feature>
<feature type="compositionally biased region" description="Low complexity" evidence="1">
    <location>
        <begin position="368"/>
        <end position="378"/>
    </location>
</feature>
<feature type="compositionally biased region" description="Polar residues" evidence="1">
    <location>
        <begin position="379"/>
        <end position="391"/>
    </location>
</feature>
<feature type="compositionally biased region" description="Low complexity" evidence="1">
    <location>
        <begin position="439"/>
        <end position="467"/>
    </location>
</feature>
<feature type="compositionally biased region" description="Polar residues" evidence="1">
    <location>
        <begin position="468"/>
        <end position="489"/>
    </location>
</feature>